<name>BRE1_ASPFU</name>
<accession>Q4WDD7</accession>
<sequence length="725" mass="82107">MPATEASPVVCSESAIVKMEDRKRPATHDHNDSAPPLKKQATSVNGGSKPHPDADMPWKDDLERFQKDAIWRQMQEYKREKMSLETKLKEMSKATAYHNDHLRVIDAWFNQLIDEVKTLMGALDEDKDRPSFRSSLLFENMEDFEKHLKARSDDIRAIITRLQSFSINAPPEVTDLQSQLAKKLAEEKGTIAELEKALAEKQQLEESLEAASLRYMVAEKKLDRARSLTVAKLEKQYLLGAQRPGGDSASGNREEQSPVNGLPSSAERNTELEEAHKQLVAVSEKQKEQLQKLESENANLLSQITELNIKRTKPTDDDYAHTDLFKQLRSQYDDVVKRINHLEATNIQLREEAAKLRSERTAYRNQVDEETQNVIAEKEAQLMRAETDLARIRNARDELLADQQMRKAAQEQEKIATTKVQELADAAQARINALESEVDRLRLQLDNTKAAHTEIDDVPLEELRAKYQNLERQYSMLNTELTSMQTACKKYSLLASQKVADFSALEEKVARLTAEKSKADQKYFAAMKSKEARELEVRTLRIQNSKSSDIVSQLKESEATTRSLLANMEKQASETKEALNSIISKHHAAQQQIAENNIVIDGLKAQVNELKALSVSKDSSLASASSACRKAETEIESLKVTLADTKKSLENWKNKSLGNSSSEYEMLRSLALCTVCRRNFKNTAIKTCGHVFCKECVEERLTSRSRKCPNCNRSFGNNDHMHITL</sequence>
<evidence type="ECO:0000250" key="1">
    <source>
        <dbReference type="UniProtKB" id="Q07457"/>
    </source>
</evidence>
<evidence type="ECO:0000255" key="2"/>
<evidence type="ECO:0000255" key="3">
    <source>
        <dbReference type="PROSITE-ProRule" id="PRU00175"/>
    </source>
</evidence>
<evidence type="ECO:0000256" key="4">
    <source>
        <dbReference type="SAM" id="MobiDB-lite"/>
    </source>
</evidence>
<evidence type="ECO:0000305" key="5"/>
<proteinExistence type="inferred from homology"/>
<organism>
    <name type="scientific">Aspergillus fumigatus (strain ATCC MYA-4609 / CBS 101355 / FGSC A1100 / Af293)</name>
    <name type="common">Neosartorya fumigata</name>
    <dbReference type="NCBI Taxonomy" id="330879"/>
    <lineage>
        <taxon>Eukaryota</taxon>
        <taxon>Fungi</taxon>
        <taxon>Dikarya</taxon>
        <taxon>Ascomycota</taxon>
        <taxon>Pezizomycotina</taxon>
        <taxon>Eurotiomycetes</taxon>
        <taxon>Eurotiomycetidae</taxon>
        <taxon>Eurotiales</taxon>
        <taxon>Aspergillaceae</taxon>
        <taxon>Aspergillus</taxon>
        <taxon>Aspergillus subgen. Fumigati</taxon>
    </lineage>
</organism>
<feature type="chain" id="PRO_0000245301" description="E3 ubiquitin-protein ligase bre1">
    <location>
        <begin position="1"/>
        <end position="725"/>
    </location>
</feature>
<feature type="zinc finger region" description="RING-type" evidence="3">
    <location>
        <begin position="673"/>
        <end position="712"/>
    </location>
</feature>
<feature type="region of interest" description="Disordered" evidence="4">
    <location>
        <begin position="1"/>
        <end position="58"/>
    </location>
</feature>
<feature type="region of interest" description="Disordered" evidence="4">
    <location>
        <begin position="241"/>
        <end position="268"/>
    </location>
</feature>
<feature type="coiled-coil region" evidence="2">
    <location>
        <begin position="175"/>
        <end position="228"/>
    </location>
</feature>
<feature type="coiled-coil region" evidence="2">
    <location>
        <begin position="269"/>
        <end position="526"/>
    </location>
</feature>
<feature type="coiled-coil region" evidence="2">
    <location>
        <begin position="559"/>
        <end position="656"/>
    </location>
</feature>
<feature type="compositionally biased region" description="Basic and acidic residues" evidence="4">
    <location>
        <begin position="18"/>
        <end position="32"/>
    </location>
</feature>
<feature type="compositionally biased region" description="Polar residues" evidence="4">
    <location>
        <begin position="257"/>
        <end position="267"/>
    </location>
</feature>
<protein>
    <recommendedName>
        <fullName>E3 ubiquitin-protein ligase bre1</fullName>
        <ecNumber evidence="1">2.3.2.27</ecNumber>
    </recommendedName>
    <alternativeName>
        <fullName evidence="5">RING-type E3 ubiquitin transferase bre1</fullName>
    </alternativeName>
</protein>
<gene>
    <name type="primary">bre1</name>
    <name type="ORF">AFUA_6G04390</name>
</gene>
<keyword id="KW-0156">Chromatin regulator</keyword>
<keyword id="KW-0175">Coiled coil</keyword>
<keyword id="KW-0479">Metal-binding</keyword>
<keyword id="KW-0539">Nucleus</keyword>
<keyword id="KW-1185">Reference proteome</keyword>
<keyword id="KW-0808">Transferase</keyword>
<keyword id="KW-0833">Ubl conjugation pathway</keyword>
<keyword id="KW-0862">Zinc</keyword>
<keyword id="KW-0863">Zinc-finger</keyword>
<comment type="function">
    <text evidence="1">E3 ubiquitin-protein ligase that mediates monoubiquitination of histone H2B to form H2BK123ub1. H2BK123ub1 gives a specific tag for epigenetic transcriptional activation and is also a prerequisite for H3K4me and H3K79me formation.</text>
</comment>
<comment type="catalytic activity">
    <reaction evidence="1">
        <text>S-ubiquitinyl-[E2 ubiquitin-conjugating enzyme]-L-cysteine + [acceptor protein]-L-lysine = [E2 ubiquitin-conjugating enzyme]-L-cysteine + N(6)-ubiquitinyl-[acceptor protein]-L-lysine.</text>
        <dbReference type="EC" id="2.3.2.27"/>
    </reaction>
</comment>
<comment type="pathway">
    <text>Protein modification; protein ubiquitination.</text>
</comment>
<comment type="subcellular location">
    <subcellularLocation>
        <location evidence="1">Nucleus</location>
    </subcellularLocation>
</comment>
<comment type="similarity">
    <text evidence="5">Belongs to the BRE1 family.</text>
</comment>
<comment type="sequence caution" evidence="5">
    <conflict type="erroneous gene model prediction">
        <sequence resource="EMBL-CDS" id="EAL85601"/>
    </conflict>
</comment>
<reference key="1">
    <citation type="journal article" date="2005" name="Nature">
        <title>Genomic sequence of the pathogenic and allergenic filamentous fungus Aspergillus fumigatus.</title>
        <authorList>
            <person name="Nierman W.C."/>
            <person name="Pain A."/>
            <person name="Anderson M.J."/>
            <person name="Wortman J.R."/>
            <person name="Kim H.S."/>
            <person name="Arroyo J."/>
            <person name="Berriman M."/>
            <person name="Abe K."/>
            <person name="Archer D.B."/>
            <person name="Bermejo C."/>
            <person name="Bennett J.W."/>
            <person name="Bowyer P."/>
            <person name="Chen D."/>
            <person name="Collins M."/>
            <person name="Coulsen R."/>
            <person name="Davies R."/>
            <person name="Dyer P.S."/>
            <person name="Farman M.L."/>
            <person name="Fedorova N."/>
            <person name="Fedorova N.D."/>
            <person name="Feldblyum T.V."/>
            <person name="Fischer R."/>
            <person name="Fosker N."/>
            <person name="Fraser A."/>
            <person name="Garcia J.L."/>
            <person name="Garcia M.J."/>
            <person name="Goble A."/>
            <person name="Goldman G.H."/>
            <person name="Gomi K."/>
            <person name="Griffith-Jones S."/>
            <person name="Gwilliam R."/>
            <person name="Haas B.J."/>
            <person name="Haas H."/>
            <person name="Harris D.E."/>
            <person name="Horiuchi H."/>
            <person name="Huang J."/>
            <person name="Humphray S."/>
            <person name="Jimenez J."/>
            <person name="Keller N."/>
            <person name="Khouri H."/>
            <person name="Kitamoto K."/>
            <person name="Kobayashi T."/>
            <person name="Konzack S."/>
            <person name="Kulkarni R."/>
            <person name="Kumagai T."/>
            <person name="Lafton A."/>
            <person name="Latge J.-P."/>
            <person name="Li W."/>
            <person name="Lord A."/>
            <person name="Lu C."/>
            <person name="Majoros W.H."/>
            <person name="May G.S."/>
            <person name="Miller B.L."/>
            <person name="Mohamoud Y."/>
            <person name="Molina M."/>
            <person name="Monod M."/>
            <person name="Mouyna I."/>
            <person name="Mulligan S."/>
            <person name="Murphy L.D."/>
            <person name="O'Neil S."/>
            <person name="Paulsen I."/>
            <person name="Penalva M.A."/>
            <person name="Pertea M."/>
            <person name="Price C."/>
            <person name="Pritchard B.L."/>
            <person name="Quail M.A."/>
            <person name="Rabbinowitsch E."/>
            <person name="Rawlins N."/>
            <person name="Rajandream M.A."/>
            <person name="Reichard U."/>
            <person name="Renauld H."/>
            <person name="Robson G.D."/>
            <person name="Rodriguez de Cordoba S."/>
            <person name="Rodriguez-Pena J.M."/>
            <person name="Ronning C.M."/>
            <person name="Rutter S."/>
            <person name="Salzberg S.L."/>
            <person name="Sanchez M."/>
            <person name="Sanchez-Ferrero J.C."/>
            <person name="Saunders D."/>
            <person name="Seeger K."/>
            <person name="Squares R."/>
            <person name="Squares S."/>
            <person name="Takeuchi M."/>
            <person name="Tekaia F."/>
            <person name="Turner G."/>
            <person name="Vazquez de Aldana C.R."/>
            <person name="Weidman J."/>
            <person name="White O."/>
            <person name="Woodward J.R."/>
            <person name="Yu J.-H."/>
            <person name="Fraser C.M."/>
            <person name="Galagan J.E."/>
            <person name="Asai K."/>
            <person name="Machida M."/>
            <person name="Hall N."/>
            <person name="Barrell B.G."/>
            <person name="Denning D.W."/>
        </authorList>
    </citation>
    <scope>NUCLEOTIDE SEQUENCE [LARGE SCALE GENOMIC DNA]</scope>
    <source>
        <strain>ATCC MYA-4609 / CBS 101355 / FGSC A1100 / Af293</strain>
    </source>
</reference>
<dbReference type="EC" id="2.3.2.27" evidence="1"/>
<dbReference type="EMBL" id="AAHF01000012">
    <property type="protein sequence ID" value="EAL85601.1"/>
    <property type="status" value="ALT_SEQ"/>
    <property type="molecule type" value="Genomic_DNA"/>
</dbReference>
<dbReference type="RefSeq" id="XP_747639.1">
    <property type="nucleotide sequence ID" value="XM_742546.1"/>
</dbReference>
<dbReference type="SMR" id="Q4WDD7"/>
<dbReference type="FunCoup" id="Q4WDD7">
    <property type="interactions" value="891"/>
</dbReference>
<dbReference type="STRING" id="330879.Q4WDD7"/>
<dbReference type="GeneID" id="3505313"/>
<dbReference type="KEGG" id="afm:AFUA_6G04390"/>
<dbReference type="eggNOG" id="KOG0978">
    <property type="taxonomic scope" value="Eukaryota"/>
</dbReference>
<dbReference type="HOGENOM" id="CLU_019713_2_0_1"/>
<dbReference type="InParanoid" id="Q4WDD7"/>
<dbReference type="OrthoDB" id="654191at2759"/>
<dbReference type="UniPathway" id="UPA00143"/>
<dbReference type="Proteomes" id="UP000002530">
    <property type="component" value="Chromosome 6"/>
</dbReference>
<dbReference type="GO" id="GO:0033503">
    <property type="term" value="C:HULC complex"/>
    <property type="evidence" value="ECO:0000318"/>
    <property type="project" value="GO_Central"/>
</dbReference>
<dbReference type="GO" id="GO:0005634">
    <property type="term" value="C:nucleus"/>
    <property type="evidence" value="ECO:0000318"/>
    <property type="project" value="GO_Central"/>
</dbReference>
<dbReference type="GO" id="GO:0061630">
    <property type="term" value="F:ubiquitin protein ligase activity"/>
    <property type="evidence" value="ECO:0000318"/>
    <property type="project" value="GO_Central"/>
</dbReference>
<dbReference type="GO" id="GO:0008270">
    <property type="term" value="F:zinc ion binding"/>
    <property type="evidence" value="ECO:0007669"/>
    <property type="project" value="UniProtKB-KW"/>
</dbReference>
<dbReference type="GO" id="GO:0006325">
    <property type="term" value="P:chromatin organization"/>
    <property type="evidence" value="ECO:0007669"/>
    <property type="project" value="UniProtKB-KW"/>
</dbReference>
<dbReference type="GO" id="GO:0016567">
    <property type="term" value="P:protein ubiquitination"/>
    <property type="evidence" value="ECO:0007669"/>
    <property type="project" value="UniProtKB-UniPathway"/>
</dbReference>
<dbReference type="CDD" id="cd16499">
    <property type="entry name" value="RING-HC_Bre1-like"/>
    <property type="match status" value="1"/>
</dbReference>
<dbReference type="Gene3D" id="3.30.40.10">
    <property type="entry name" value="Zinc/RING finger domain, C3HC4 (zinc finger)"/>
    <property type="match status" value="1"/>
</dbReference>
<dbReference type="InterPro" id="IPR013956">
    <property type="entry name" value="E3_ubiquit_lig_Bre1"/>
</dbReference>
<dbReference type="InterPro" id="IPR001841">
    <property type="entry name" value="Znf_RING"/>
</dbReference>
<dbReference type="InterPro" id="IPR013083">
    <property type="entry name" value="Znf_RING/FYVE/PHD"/>
</dbReference>
<dbReference type="InterPro" id="IPR017907">
    <property type="entry name" value="Znf_RING_CS"/>
</dbReference>
<dbReference type="PANTHER" id="PTHR23163:SF0">
    <property type="entry name" value="E3 UBIQUITIN-PROTEIN LIGASE BRE1"/>
    <property type="match status" value="1"/>
</dbReference>
<dbReference type="PANTHER" id="PTHR23163">
    <property type="entry name" value="RING FINGER PROTEIN-RELATED"/>
    <property type="match status" value="1"/>
</dbReference>
<dbReference type="Pfam" id="PF08647">
    <property type="entry name" value="BRE1"/>
    <property type="match status" value="1"/>
</dbReference>
<dbReference type="Pfam" id="PF13923">
    <property type="entry name" value="zf-C3HC4_2"/>
    <property type="match status" value="1"/>
</dbReference>
<dbReference type="SMART" id="SM00184">
    <property type="entry name" value="RING"/>
    <property type="match status" value="1"/>
</dbReference>
<dbReference type="SUPFAM" id="SSF57850">
    <property type="entry name" value="RING/U-box"/>
    <property type="match status" value="1"/>
</dbReference>
<dbReference type="PROSITE" id="PS00518">
    <property type="entry name" value="ZF_RING_1"/>
    <property type="match status" value="1"/>
</dbReference>
<dbReference type="PROSITE" id="PS50089">
    <property type="entry name" value="ZF_RING_2"/>
    <property type="match status" value="1"/>
</dbReference>